<protein>
    <recommendedName>
        <fullName evidence="3">Histidine racemase</fullName>
        <ecNumber evidence="2">5.1.1.24</ecNumber>
    </recommendedName>
</protein>
<proteinExistence type="evidence at protein level"/>
<gene>
    <name evidence="3" type="primary">hisR</name>
    <name evidence="6" type="ordered locus">FN1732</name>
</gene>
<keyword id="KW-0002">3D-structure</keyword>
<keyword id="KW-0413">Isomerase</keyword>
<keyword id="KW-1185">Reference proteome</keyword>
<name>HISR_FUSNN</name>
<reference key="1">
    <citation type="journal article" date="2002" name="J. Bacteriol.">
        <title>Genome sequence and analysis of the oral bacterium Fusobacterium nucleatum strain ATCC 25586.</title>
        <authorList>
            <person name="Kapatral V."/>
            <person name="Anderson I."/>
            <person name="Ivanova N."/>
            <person name="Reznik G."/>
            <person name="Los T."/>
            <person name="Lykidis A."/>
            <person name="Bhattacharyya A."/>
            <person name="Bartman A."/>
            <person name="Gardner W."/>
            <person name="Grechkin G."/>
            <person name="Zhu L."/>
            <person name="Vasieva O."/>
            <person name="Chu L."/>
            <person name="Kogan Y."/>
            <person name="Chaga O."/>
            <person name="Goltsman E."/>
            <person name="Bernal A."/>
            <person name="Larsen N."/>
            <person name="D'Souza M."/>
            <person name="Walunas T."/>
            <person name="Pusch G."/>
            <person name="Haselkorn R."/>
            <person name="Fonstein M."/>
            <person name="Kyrpides N.C."/>
            <person name="Overbeek R."/>
        </authorList>
    </citation>
    <scope>NUCLEOTIDE SEQUENCE [LARGE SCALE GENOMIC DNA]</scope>
    <source>
        <strain>ATCC 25586 / DSM 15643 / BCRC 10681 / CIP 101130 / JCM 8532 / KCTC 2640 / LMG 13131 / VPI 4355</strain>
    </source>
</reference>
<reference key="2">
    <citation type="journal article" date="2023" name="Arch. Biochem. Biophys.">
        <title>Biosynthesis of meso-lanthionine in Fusobacterium nucleatum.</title>
        <authorList>
            <person name="Darbyshire A."/>
            <person name="Mothersole R."/>
            <person name="Wolthers K.R."/>
        </authorList>
    </citation>
    <scope>FUNCTION</scope>
    <scope>BIOPHYSICOCHEMICAL PROPERTIES</scope>
    <source>
        <strain>ATCC 25586 / DSM 15643 / BCRC 10681 / CIP 101130 / JCM 8532 / KCTC 2640 / LMG 13131 / VPI 4355</strain>
    </source>
</reference>
<reference key="3">
    <citation type="journal article" date="2024" name="J. Biol. Chem.">
        <title>Discovery, characterization, and structure of a cofactor-independent histidine racemase from the oral pathogen Fusobacterium nucleatum.</title>
        <authorList>
            <person name="Lamer T."/>
            <person name="Chen P."/>
            <person name="Venter M.J."/>
            <person name="van Belkum M.J."/>
            <person name="Wijewardane A."/>
            <person name="Wu C."/>
            <person name="Lemieux M.J."/>
            <person name="Vederas J.C."/>
        </authorList>
    </citation>
    <scope>X-RAY CRYSTALLOGRAPHY (2.5 ANGSTROMS) OF MUTANTS SER-67 AND SER-209</scope>
    <scope>FUNCTION</scope>
    <scope>CATALYTIC ACTIVITY</scope>
    <scope>ACTIVITY REGULATION</scope>
    <scope>BIOPHYSICOCHEMICAL PROPERTIES</scope>
    <scope>SUBUNIT</scope>
    <scope>ACTIVE SITE</scope>
    <scope>MUTAGENESIS OF CYS-67 AND CYS-209</scope>
    <source>
        <strain>ATCC 25586 / DSM 15643 / BCRC 10681 / CIP 101130 / JCM 8532 / KCTC 2640 / LMG 13131 / VPI 4355</strain>
    </source>
</reference>
<dbReference type="EC" id="5.1.1.24" evidence="2"/>
<dbReference type="EMBL" id="AE009951">
    <property type="protein sequence ID" value="AAL93847.1"/>
    <property type="molecule type" value="Genomic_DNA"/>
</dbReference>
<dbReference type="RefSeq" id="NP_602548.1">
    <property type="nucleotide sequence ID" value="NC_003454.1"/>
</dbReference>
<dbReference type="RefSeq" id="WP_011015798.1">
    <property type="nucleotide sequence ID" value="NZ_CP028101.1"/>
</dbReference>
<dbReference type="PDB" id="9CR1">
    <property type="method" value="X-ray"/>
    <property type="resolution" value="2.50 A"/>
    <property type="chains" value="A/B/C/D=1-265"/>
</dbReference>
<dbReference type="PDB" id="9CR6">
    <property type="method" value="X-ray"/>
    <property type="resolution" value="2.49 A"/>
    <property type="chains" value="A/B/C/D=1-265"/>
</dbReference>
<dbReference type="PDBsum" id="9CR1"/>
<dbReference type="PDBsum" id="9CR6"/>
<dbReference type="STRING" id="190304.FN1732"/>
<dbReference type="PaxDb" id="190304-FN1732"/>
<dbReference type="EnsemblBacteria" id="AAL93847">
    <property type="protein sequence ID" value="AAL93847"/>
    <property type="gene ID" value="FN1732"/>
</dbReference>
<dbReference type="GeneID" id="79782664"/>
<dbReference type="KEGG" id="fnu:FN1732"/>
<dbReference type="PATRIC" id="fig|190304.8.peg.221"/>
<dbReference type="eggNOG" id="COG0253">
    <property type="taxonomic scope" value="Bacteria"/>
</dbReference>
<dbReference type="HOGENOM" id="CLU_087271_0_0_0"/>
<dbReference type="InParanoid" id="Q8RI81"/>
<dbReference type="BioCyc" id="FNUC190304:G1FZS-232-MONOMER"/>
<dbReference type="Proteomes" id="UP000002521">
    <property type="component" value="Chromosome"/>
</dbReference>
<dbReference type="SUPFAM" id="SSF54506">
    <property type="entry name" value="Diaminopimelate epimerase-like"/>
    <property type="match status" value="2"/>
</dbReference>
<comment type="function">
    <text evidence="1 2">Cofactor-independent isomerase that catalyzes the reversible conversion of L-histidine to D-histidine (PubMed:39424140). Shows weak activity with L,L-lanthionine (PubMed:37329940, PubMed:39424140). The catalytic turnover is 10'000-fold faster with L-histidine than with L,L-lanthionine (PubMed:39424140). May play a role in growth of F.nucleatum (PubMed:39424140).</text>
</comment>
<comment type="catalytic activity">
    <reaction evidence="2">
        <text>L-histidine = D-histidine</text>
        <dbReference type="Rhea" id="RHEA:59188"/>
        <dbReference type="ChEBI" id="CHEBI:57595"/>
        <dbReference type="ChEBI" id="CHEBI:142967"/>
        <dbReference type="EC" id="5.1.1.24"/>
    </reaction>
</comment>
<comment type="activity regulation">
    <text evidence="2">Activity is not affected by buffer composition (PO(4) or Tris), ions (SO(4)(2-), Mg(2+) and EDTA) or the PLP inhibitor hydroxylamine (PubMed:39424140). However, the activity is hindered by iodoacetamide and Hg(2+), which are known inhibitors of enzymes with catalytic thiols (PubMed:39424140).</text>
</comment>
<comment type="biophysicochemical properties">
    <kinetics>
        <KM evidence="2">4 mM for L-histidine</KM>
        <KM evidence="2">24 mM for D-histidine</KM>
        <KM evidence="1">1.9 mM for L,L-lanthionine</KM>
        <text evidence="1 2">kcat is 74 sec(-1) with L-histidine as substrate (PubMed:39424140). kcat is 250 sec(-1) with D-histidine as substrate (PubMed:39424140). kcat is 0.07 sec(-1) with L,L-lanthionine as substrate (PubMed:37329940).</text>
    </kinetics>
</comment>
<comment type="subunit">
    <text evidence="2">Homodimer.</text>
</comment>
<comment type="miscellaneous">
    <text evidence="1">Was originally proposed to encode a lanthionine epimerase that catalyzes the conversion of L,L-lanthionine to meso-lanthionine, the last step in the lanthionine biosynthetic pathway in this organism (PubMed:37329940). However, the authors found low catalytic turnover and low catalytic efficiency, suggesting that L,L-lanthionine is not the physiological substrate for the enzyme (PubMed:37329940).</text>
</comment>
<comment type="similarity">
    <text evidence="4">Belongs to the histidine racemase family.</text>
</comment>
<sequence>MDRKVQVLDFIKINPAGNITILIDNFDIYDKNIPKLSEEIMKETNLYAEQVGFIKDSHLQMMGGEFCGNASRAFASLLAFRDKDFSKQKNYNITCSGESKVLDVDVRNDGAKNKFLAKIKMPKFLSLEEINVDEYKLGLVRFSGINHFIFNIKENKETSFENIIDLVKKYLSNEEYSAFGIMFFDSDNLSMKPYVYVKEVGSGVYENSCASGTTALGYYLKKCKNLDRAKIVQPNGWLEYIIENDEMYIDGPVEIIAEGKIYIGK</sequence>
<feature type="chain" id="PRO_0000461906" description="Histidine racemase">
    <location>
        <begin position="1"/>
        <end position="265"/>
    </location>
</feature>
<feature type="active site" description="Proton acceptor" evidence="5">
    <location>
        <position position="67"/>
    </location>
</feature>
<feature type="active site" description="Proton donor" evidence="5">
    <location>
        <position position="209"/>
    </location>
</feature>
<feature type="mutagenesis site" description="Catalytic turnover is greatly reduced with D- and L-histidine." evidence="2">
    <original>C</original>
    <variation>S</variation>
    <location>
        <position position="67"/>
    </location>
</feature>
<feature type="mutagenesis site" description="Catalytic turnover is greatly reduced with D- and L-histidine." evidence="2">
    <original>C</original>
    <variation>S</variation>
    <location>
        <position position="209"/>
    </location>
</feature>
<evidence type="ECO:0000269" key="1">
    <source>
    </source>
</evidence>
<evidence type="ECO:0000269" key="2">
    <source>
    </source>
</evidence>
<evidence type="ECO:0000303" key="3">
    <source>
    </source>
</evidence>
<evidence type="ECO:0000305" key="4"/>
<evidence type="ECO:0000305" key="5">
    <source>
    </source>
</evidence>
<evidence type="ECO:0000312" key="6">
    <source>
        <dbReference type="EMBL" id="AAL93847.1"/>
    </source>
</evidence>
<accession>Q8RI81</accession>
<organism>
    <name type="scientific">Fusobacterium nucleatum subsp. nucleatum (strain ATCC 25586 / DSM 15643 / BCRC 10681 / CIP 101130 / JCM 8532 / KCTC 2640 / LMG 13131 / VPI 4355)</name>
    <dbReference type="NCBI Taxonomy" id="190304"/>
    <lineage>
        <taxon>Bacteria</taxon>
        <taxon>Fusobacteriati</taxon>
        <taxon>Fusobacteriota</taxon>
        <taxon>Fusobacteriia</taxon>
        <taxon>Fusobacteriales</taxon>
        <taxon>Fusobacteriaceae</taxon>
        <taxon>Fusobacterium</taxon>
    </lineage>
</organism>